<protein>
    <recommendedName>
        <fullName>Putative HMP/thiamine import ATP-binding protein YkoD</fullName>
        <ecNumber>7.6.2.-</ecNumber>
    </recommendedName>
</protein>
<evidence type="ECO:0000250" key="1"/>
<evidence type="ECO:0000255" key="2">
    <source>
        <dbReference type="PROSITE-ProRule" id="PRU00434"/>
    </source>
</evidence>
<evidence type="ECO:0000305" key="3"/>
<evidence type="ECO:0000305" key="4">
    <source>
    </source>
</evidence>
<evidence type="ECO:0000305" key="5">
    <source>
    </source>
</evidence>
<keyword id="KW-0067">ATP-binding</keyword>
<keyword id="KW-1003">Cell membrane</keyword>
<keyword id="KW-0472">Membrane</keyword>
<keyword id="KW-0547">Nucleotide-binding</keyword>
<keyword id="KW-1185">Reference proteome</keyword>
<keyword id="KW-0677">Repeat</keyword>
<keyword id="KW-1278">Translocase</keyword>
<keyword id="KW-0813">Transport</keyword>
<gene>
    <name type="primary">ykoD</name>
    <name type="ordered locus">BSU13220</name>
</gene>
<organism>
    <name type="scientific">Bacillus subtilis (strain 168)</name>
    <dbReference type="NCBI Taxonomy" id="224308"/>
    <lineage>
        <taxon>Bacteria</taxon>
        <taxon>Bacillati</taxon>
        <taxon>Bacillota</taxon>
        <taxon>Bacilli</taxon>
        <taxon>Bacillales</taxon>
        <taxon>Bacillaceae</taxon>
        <taxon>Bacillus</taxon>
    </lineage>
</organism>
<comment type="function">
    <text evidence="4 5">Part of the ABC transporter complex YkoCDEF that could transport hydroxymethylpyrimidine (HMP) and/or thiamine. Could also transport other HMP-containing products. Responsible for energy coupling to the transport system (Probable).</text>
</comment>
<comment type="subunit">
    <text evidence="3">The complex is composed of two ATP-binding proteins (YkoD), two transmembrane proteins (YkoC and YkoE) and a solute-binding protein (YkoF).</text>
</comment>
<comment type="subcellular location">
    <subcellularLocation>
        <location evidence="1">Cell membrane</location>
        <topology evidence="1">Peripheral membrane protein</topology>
    </subcellularLocation>
</comment>
<comment type="similarity">
    <text evidence="3">Belongs to the ABC transporter superfamily.</text>
</comment>
<comment type="sequence caution" evidence="3">
    <conflict type="frameshift">
        <sequence resource="EMBL-CDS" id="CAA05601"/>
    </conflict>
</comment>
<name>YKOD_BACSU</name>
<feature type="chain" id="PRO_0000091988" description="Putative HMP/thiamine import ATP-binding protein YkoD">
    <location>
        <begin position="1"/>
        <end position="547"/>
    </location>
</feature>
<feature type="domain" description="ABC transporter 1" evidence="2">
    <location>
        <begin position="8"/>
        <end position="250"/>
    </location>
</feature>
<feature type="domain" description="ABC transporter 2" evidence="2">
    <location>
        <begin position="295"/>
        <end position="523"/>
    </location>
</feature>
<feature type="binding site" evidence="2">
    <location>
        <begin position="42"/>
        <end position="49"/>
    </location>
    <ligand>
        <name>ATP</name>
        <dbReference type="ChEBI" id="CHEBI:30616"/>
        <label>1</label>
    </ligand>
</feature>
<feature type="binding site" evidence="2">
    <location>
        <begin position="327"/>
        <end position="334"/>
    </location>
    <ligand>
        <name>ATP</name>
        <dbReference type="ChEBI" id="CHEBI:30616"/>
        <label>2</label>
    </ligand>
</feature>
<feature type="sequence conflict" description="In Ref. 1; CAA05601." evidence="3" ref="1">
    <original>E</original>
    <variation>G</variation>
    <location>
        <position position="134"/>
    </location>
</feature>
<feature type="sequence conflict" description="In Ref. 1; CAA05601." evidence="3" ref="1">
    <original>L</original>
    <variation>Q</variation>
    <location>
        <position position="485"/>
    </location>
</feature>
<feature type="sequence conflict" description="In Ref. 1; CAA05601." evidence="3" ref="1">
    <original>G</original>
    <variation>A</variation>
    <location>
        <position position="500"/>
    </location>
</feature>
<dbReference type="EC" id="7.6.2.-"/>
<dbReference type="EMBL" id="AJ002571">
    <property type="protein sequence ID" value="CAA05601.1"/>
    <property type="status" value="ALT_FRAME"/>
    <property type="molecule type" value="Genomic_DNA"/>
</dbReference>
<dbReference type="EMBL" id="AL009126">
    <property type="protein sequence ID" value="CAB13179.2"/>
    <property type="molecule type" value="Genomic_DNA"/>
</dbReference>
<dbReference type="PIR" id="H69858">
    <property type="entry name" value="H69858"/>
</dbReference>
<dbReference type="RefSeq" id="WP_003245821.1">
    <property type="nucleotide sequence ID" value="NZ_OZ025638.1"/>
</dbReference>
<dbReference type="SMR" id="O34362"/>
<dbReference type="FunCoup" id="O34362">
    <property type="interactions" value="56"/>
</dbReference>
<dbReference type="STRING" id="224308.BSU13220"/>
<dbReference type="TCDB" id="3.A.1.30.1">
    <property type="family name" value="the atp-binding cassette (abc) superfamily"/>
</dbReference>
<dbReference type="PaxDb" id="224308-BSU13220"/>
<dbReference type="EnsemblBacteria" id="CAB13179">
    <property type="protein sequence ID" value="CAB13179"/>
    <property type="gene ID" value="BSU_13220"/>
</dbReference>
<dbReference type="GeneID" id="936472"/>
<dbReference type="KEGG" id="bsu:BSU13220"/>
<dbReference type="PATRIC" id="fig|224308.179.peg.1436"/>
<dbReference type="eggNOG" id="COG1122">
    <property type="taxonomic scope" value="Bacteria"/>
</dbReference>
<dbReference type="InParanoid" id="O34362"/>
<dbReference type="OrthoDB" id="501320at2"/>
<dbReference type="PhylomeDB" id="O34362"/>
<dbReference type="BioCyc" id="BSUB:BSU13220-MONOMER"/>
<dbReference type="Proteomes" id="UP000001570">
    <property type="component" value="Chromosome"/>
</dbReference>
<dbReference type="GO" id="GO:0043190">
    <property type="term" value="C:ATP-binding cassette (ABC) transporter complex"/>
    <property type="evidence" value="ECO:0000318"/>
    <property type="project" value="GO_Central"/>
</dbReference>
<dbReference type="GO" id="GO:0005524">
    <property type="term" value="F:ATP binding"/>
    <property type="evidence" value="ECO:0000318"/>
    <property type="project" value="GO_Central"/>
</dbReference>
<dbReference type="GO" id="GO:0016887">
    <property type="term" value="F:ATP hydrolysis activity"/>
    <property type="evidence" value="ECO:0007669"/>
    <property type="project" value="InterPro"/>
</dbReference>
<dbReference type="GO" id="GO:0042626">
    <property type="term" value="F:ATPase-coupled transmembrane transporter activity"/>
    <property type="evidence" value="ECO:0000318"/>
    <property type="project" value="GO_Central"/>
</dbReference>
<dbReference type="CDD" id="cd03225">
    <property type="entry name" value="ABC_cobalt_CbiO_domain1"/>
    <property type="match status" value="2"/>
</dbReference>
<dbReference type="FunFam" id="3.40.50.300:FF:000224">
    <property type="entry name" value="Energy-coupling factor transporter ATP-binding protein EcfA"/>
    <property type="match status" value="1"/>
</dbReference>
<dbReference type="Gene3D" id="3.40.50.300">
    <property type="entry name" value="P-loop containing nucleotide triphosphate hydrolases"/>
    <property type="match status" value="2"/>
</dbReference>
<dbReference type="InterPro" id="IPR003593">
    <property type="entry name" value="AAA+_ATPase"/>
</dbReference>
<dbReference type="InterPro" id="IPR003439">
    <property type="entry name" value="ABC_transporter-like_ATP-bd"/>
</dbReference>
<dbReference type="InterPro" id="IPR017871">
    <property type="entry name" value="ABC_transporter-like_CS"/>
</dbReference>
<dbReference type="InterPro" id="IPR015856">
    <property type="entry name" value="ABC_transpr_CbiO/EcfA_su"/>
</dbReference>
<dbReference type="InterPro" id="IPR050095">
    <property type="entry name" value="ECF_ABC_transporter_ATP-bd"/>
</dbReference>
<dbReference type="InterPro" id="IPR027417">
    <property type="entry name" value="P-loop_NTPase"/>
</dbReference>
<dbReference type="NCBIfam" id="NF010167">
    <property type="entry name" value="PRK13648.1"/>
    <property type="match status" value="2"/>
</dbReference>
<dbReference type="PANTHER" id="PTHR43553">
    <property type="entry name" value="HEAVY METAL TRANSPORTER"/>
    <property type="match status" value="1"/>
</dbReference>
<dbReference type="PANTHER" id="PTHR43553:SF19">
    <property type="entry name" value="HMP_THIAMINE IMPORT ATP-BINDING PROTEIN YKOD-RELATED"/>
    <property type="match status" value="1"/>
</dbReference>
<dbReference type="Pfam" id="PF00005">
    <property type="entry name" value="ABC_tran"/>
    <property type="match status" value="2"/>
</dbReference>
<dbReference type="SMART" id="SM00382">
    <property type="entry name" value="AAA"/>
    <property type="match status" value="2"/>
</dbReference>
<dbReference type="SUPFAM" id="SSF52540">
    <property type="entry name" value="P-loop containing nucleoside triphosphate hydrolases"/>
    <property type="match status" value="2"/>
</dbReference>
<dbReference type="PROSITE" id="PS00211">
    <property type="entry name" value="ABC_TRANSPORTER_1"/>
    <property type="match status" value="2"/>
</dbReference>
<dbReference type="PROSITE" id="PS50893">
    <property type="entry name" value="ABC_TRANSPORTER_2"/>
    <property type="match status" value="2"/>
</dbReference>
<reference key="1">
    <citation type="submission" date="1997-11" db="EMBL/GenBank/DDBJ databases">
        <title>Sequence of the Bacillus subtilis genome between xlyA and ykoR.</title>
        <authorList>
            <person name="Devine K.M."/>
        </authorList>
    </citation>
    <scope>NUCLEOTIDE SEQUENCE [GENOMIC DNA]</scope>
    <source>
        <strain>168</strain>
    </source>
</reference>
<reference key="2">
    <citation type="journal article" date="1997" name="Nature">
        <title>The complete genome sequence of the Gram-positive bacterium Bacillus subtilis.</title>
        <authorList>
            <person name="Kunst F."/>
            <person name="Ogasawara N."/>
            <person name="Moszer I."/>
            <person name="Albertini A.M."/>
            <person name="Alloni G."/>
            <person name="Azevedo V."/>
            <person name="Bertero M.G."/>
            <person name="Bessieres P."/>
            <person name="Bolotin A."/>
            <person name="Borchert S."/>
            <person name="Borriss R."/>
            <person name="Boursier L."/>
            <person name="Brans A."/>
            <person name="Braun M."/>
            <person name="Brignell S.C."/>
            <person name="Bron S."/>
            <person name="Brouillet S."/>
            <person name="Bruschi C.V."/>
            <person name="Caldwell B."/>
            <person name="Capuano V."/>
            <person name="Carter N.M."/>
            <person name="Choi S.-K."/>
            <person name="Codani J.-J."/>
            <person name="Connerton I.F."/>
            <person name="Cummings N.J."/>
            <person name="Daniel R.A."/>
            <person name="Denizot F."/>
            <person name="Devine K.M."/>
            <person name="Duesterhoeft A."/>
            <person name="Ehrlich S.D."/>
            <person name="Emmerson P.T."/>
            <person name="Entian K.-D."/>
            <person name="Errington J."/>
            <person name="Fabret C."/>
            <person name="Ferrari E."/>
            <person name="Foulger D."/>
            <person name="Fritz C."/>
            <person name="Fujita M."/>
            <person name="Fujita Y."/>
            <person name="Fuma S."/>
            <person name="Galizzi A."/>
            <person name="Galleron N."/>
            <person name="Ghim S.-Y."/>
            <person name="Glaser P."/>
            <person name="Goffeau A."/>
            <person name="Golightly E.J."/>
            <person name="Grandi G."/>
            <person name="Guiseppi G."/>
            <person name="Guy B.J."/>
            <person name="Haga K."/>
            <person name="Haiech J."/>
            <person name="Harwood C.R."/>
            <person name="Henaut A."/>
            <person name="Hilbert H."/>
            <person name="Holsappel S."/>
            <person name="Hosono S."/>
            <person name="Hullo M.-F."/>
            <person name="Itaya M."/>
            <person name="Jones L.-M."/>
            <person name="Joris B."/>
            <person name="Karamata D."/>
            <person name="Kasahara Y."/>
            <person name="Klaerr-Blanchard M."/>
            <person name="Klein C."/>
            <person name="Kobayashi Y."/>
            <person name="Koetter P."/>
            <person name="Koningstein G."/>
            <person name="Krogh S."/>
            <person name="Kumano M."/>
            <person name="Kurita K."/>
            <person name="Lapidus A."/>
            <person name="Lardinois S."/>
            <person name="Lauber J."/>
            <person name="Lazarevic V."/>
            <person name="Lee S.-M."/>
            <person name="Levine A."/>
            <person name="Liu H."/>
            <person name="Masuda S."/>
            <person name="Mauel C."/>
            <person name="Medigue C."/>
            <person name="Medina N."/>
            <person name="Mellado R.P."/>
            <person name="Mizuno M."/>
            <person name="Moestl D."/>
            <person name="Nakai S."/>
            <person name="Noback M."/>
            <person name="Noone D."/>
            <person name="O'Reilly M."/>
            <person name="Ogawa K."/>
            <person name="Ogiwara A."/>
            <person name="Oudega B."/>
            <person name="Park S.-H."/>
            <person name="Parro V."/>
            <person name="Pohl T.M."/>
            <person name="Portetelle D."/>
            <person name="Porwollik S."/>
            <person name="Prescott A.M."/>
            <person name="Presecan E."/>
            <person name="Pujic P."/>
            <person name="Purnelle B."/>
            <person name="Rapoport G."/>
            <person name="Rey M."/>
            <person name="Reynolds S."/>
            <person name="Rieger M."/>
            <person name="Rivolta C."/>
            <person name="Rocha E."/>
            <person name="Roche B."/>
            <person name="Rose M."/>
            <person name="Sadaie Y."/>
            <person name="Sato T."/>
            <person name="Scanlan E."/>
            <person name="Schleich S."/>
            <person name="Schroeter R."/>
            <person name="Scoffone F."/>
            <person name="Sekiguchi J."/>
            <person name="Sekowska A."/>
            <person name="Seror S.J."/>
            <person name="Serror P."/>
            <person name="Shin B.-S."/>
            <person name="Soldo B."/>
            <person name="Sorokin A."/>
            <person name="Tacconi E."/>
            <person name="Takagi T."/>
            <person name="Takahashi H."/>
            <person name="Takemaru K."/>
            <person name="Takeuchi M."/>
            <person name="Tamakoshi A."/>
            <person name="Tanaka T."/>
            <person name="Terpstra P."/>
            <person name="Tognoni A."/>
            <person name="Tosato V."/>
            <person name="Uchiyama S."/>
            <person name="Vandenbol M."/>
            <person name="Vannier F."/>
            <person name="Vassarotti A."/>
            <person name="Viari A."/>
            <person name="Wambutt R."/>
            <person name="Wedler E."/>
            <person name="Wedler H."/>
            <person name="Weitzenegger T."/>
            <person name="Winters P."/>
            <person name="Wipat A."/>
            <person name="Yamamoto H."/>
            <person name="Yamane K."/>
            <person name="Yasumoto K."/>
            <person name="Yata K."/>
            <person name="Yoshida K."/>
            <person name="Yoshikawa H.-F."/>
            <person name="Zumstein E."/>
            <person name="Yoshikawa H."/>
            <person name="Danchin A."/>
        </authorList>
    </citation>
    <scope>NUCLEOTIDE SEQUENCE [LARGE SCALE GENOMIC DNA]</scope>
    <source>
        <strain>168</strain>
    </source>
</reference>
<reference key="3">
    <citation type="journal article" date="2009" name="Microbiology">
        <title>From a consortium sequence to a unified sequence: the Bacillus subtilis 168 reference genome a decade later.</title>
        <authorList>
            <person name="Barbe V."/>
            <person name="Cruveiller S."/>
            <person name="Kunst F."/>
            <person name="Lenoble P."/>
            <person name="Meurice G."/>
            <person name="Sekowska A."/>
            <person name="Vallenet D."/>
            <person name="Wang T."/>
            <person name="Moszer I."/>
            <person name="Medigue C."/>
            <person name="Danchin A."/>
        </authorList>
    </citation>
    <scope>SEQUENCE REVISION TO 134 AND C-TERMINUS</scope>
</reference>
<reference key="4">
    <citation type="journal article" date="2002" name="J. Biol. Chem.">
        <title>Comparative genomics of thiamin biosynthesis in procaryotes. New genes and regulatory mechanisms.</title>
        <authorList>
            <person name="Rodionov D.A."/>
            <person name="Vitreschak A.G."/>
            <person name="Mironov A.A."/>
            <person name="Gelfand M.S."/>
        </authorList>
    </citation>
    <scope>FUNCTION IN HMP TRANSPORT</scope>
</reference>
<reference key="5">
    <citation type="journal article" date="2005" name="J. Bacteriol.">
        <title>Isolation and characterization of new thiamine-deregulated mutants of Bacillus subtilis.</title>
        <authorList>
            <person name="Schyns G."/>
            <person name="Potot S."/>
            <person name="Geng Y."/>
            <person name="Barbosa T.M."/>
            <person name="Henriques A."/>
            <person name="Perkins J.B."/>
        </authorList>
    </citation>
    <scope>FUNCTION IN HMP/THIAMINE TRANSPORT</scope>
    <source>
        <strain>168 / PY79</strain>
    </source>
</reference>
<sequence>MQAFDELLTVEQLSFSYEEDEKPVFQDISFELQKGECVLLLGPSGCGKSSLALCLNGLYPEACDGIQSGHVFLFQKPVTDAETSETITQHAGVVFQDPDQQFCMLTVEDEIAFGLENLQIPKEEMTEKINAVLEKLRITHLKEKMISTLSGGQKQKVALACILAMEPELIILDEPTSLLDPFSAREFVHLMKDLQREKGFSLLVIEHQLDEWAPWIERTIVLDKSGKKALDGLTKNLFQHEAETLKKLGIAIPKVCHLQEKLSMPFTLSKEMLFKEPIPAGHVKKKKAPSGESVLEVSSLSFARGQQAIFKDISFSLREGSLTALVGPNGTGKSTLLSVLASLMKPQSGKILLYDQPLQKYKEKELRKRMGFVFQNPEHQFVTDTVYDELLFGQKANAETEKKAQHLLQRFGLAHLADHHPFAISQGQKRRLSVATMLMHDVKVLLLDEPTFGQDARTAAECMEMIQRIKAEGTAVLMITHDMELVSSYADSVLVLHDTGLAFDGSPAQLFSQETGLVQKAKLTLPLLYEWMAFQEEVRDEATVTSH</sequence>
<proteinExistence type="evidence at protein level"/>
<accession>O34362</accession>
<accession>Q796L9</accession>